<organism>
    <name type="scientific">Lactobacillus delbrueckii subsp. bulgaricus (strain ATCC 11842 / DSM 20081 / BCRC 10696 / JCM 1002 / NBRC 13953 / NCIMB 11778 / NCTC 12712 / WDCM 00102 / Lb 14)</name>
    <dbReference type="NCBI Taxonomy" id="390333"/>
    <lineage>
        <taxon>Bacteria</taxon>
        <taxon>Bacillati</taxon>
        <taxon>Bacillota</taxon>
        <taxon>Bacilli</taxon>
        <taxon>Lactobacillales</taxon>
        <taxon>Lactobacillaceae</taxon>
        <taxon>Lactobacillus</taxon>
    </lineage>
</organism>
<dbReference type="EMBL" id="CR954253">
    <property type="protein sequence ID" value="CAI97569.1"/>
    <property type="molecule type" value="Genomic_DNA"/>
</dbReference>
<dbReference type="RefSeq" id="WP_011543775.1">
    <property type="nucleotide sequence ID" value="NC_008054.1"/>
</dbReference>
<dbReference type="STRING" id="390333.Ldb0742"/>
<dbReference type="KEGG" id="ldb:Ldb0742"/>
<dbReference type="PATRIC" id="fig|390333.7.peg.689"/>
<dbReference type="eggNOG" id="COG1589">
    <property type="taxonomic scope" value="Bacteria"/>
</dbReference>
<dbReference type="HOGENOM" id="CLU_046278_0_0_9"/>
<dbReference type="BioCyc" id="LDEL390333:LDB_RS03255-MONOMER"/>
<dbReference type="Proteomes" id="UP000001259">
    <property type="component" value="Chromosome"/>
</dbReference>
<dbReference type="GO" id="GO:0032153">
    <property type="term" value="C:cell division site"/>
    <property type="evidence" value="ECO:0007669"/>
    <property type="project" value="UniProtKB-UniRule"/>
</dbReference>
<dbReference type="GO" id="GO:0005886">
    <property type="term" value="C:plasma membrane"/>
    <property type="evidence" value="ECO:0007669"/>
    <property type="project" value="UniProtKB-SubCell"/>
</dbReference>
<dbReference type="GO" id="GO:0043093">
    <property type="term" value="P:FtsZ-dependent cytokinesis"/>
    <property type="evidence" value="ECO:0007669"/>
    <property type="project" value="UniProtKB-UniRule"/>
</dbReference>
<dbReference type="Gene3D" id="3.40.50.10960">
    <property type="match status" value="1"/>
</dbReference>
<dbReference type="HAMAP" id="MF_00912">
    <property type="entry name" value="DivIB"/>
    <property type="match status" value="1"/>
</dbReference>
<dbReference type="InterPro" id="IPR026580">
    <property type="entry name" value="DivIB"/>
</dbReference>
<dbReference type="InterPro" id="IPR050487">
    <property type="entry name" value="FtsQ_DivIB"/>
</dbReference>
<dbReference type="InterPro" id="IPR034746">
    <property type="entry name" value="POTRA"/>
</dbReference>
<dbReference type="PANTHER" id="PTHR37820">
    <property type="entry name" value="CELL DIVISION PROTEIN DIVIB"/>
    <property type="match status" value="1"/>
</dbReference>
<dbReference type="PANTHER" id="PTHR37820:SF1">
    <property type="entry name" value="CELL DIVISION PROTEIN FTSQ"/>
    <property type="match status" value="1"/>
</dbReference>
<dbReference type="PROSITE" id="PS51779">
    <property type="entry name" value="POTRA"/>
    <property type="match status" value="1"/>
</dbReference>
<name>DIVIB_LACDA</name>
<proteinExistence type="inferred from homology"/>
<gene>
    <name evidence="1" type="primary">divIB</name>
    <name type="synonym">ftsQ</name>
    <name type="ordered locus">Ldb0742</name>
</gene>
<comment type="function">
    <text evidence="1">Cell division protein that may be involved in stabilizing or promoting the assembly of the division complex.</text>
</comment>
<comment type="subcellular location">
    <subcellularLocation>
        <location evidence="1">Cell membrane</location>
        <topology evidence="1">Single-pass type II membrane protein</topology>
    </subcellularLocation>
    <text evidence="1">Localizes to the division septum.</text>
</comment>
<comment type="similarity">
    <text evidence="1">Belongs to the FtsQ/DivIB family. DivIB subfamily.</text>
</comment>
<evidence type="ECO:0000255" key="1">
    <source>
        <dbReference type="HAMAP-Rule" id="MF_00912"/>
    </source>
</evidence>
<evidence type="ECO:0000255" key="2">
    <source>
        <dbReference type="PROSITE-ProRule" id="PRU01115"/>
    </source>
</evidence>
<evidence type="ECO:0000256" key="3">
    <source>
        <dbReference type="SAM" id="MobiDB-lite"/>
    </source>
</evidence>
<feature type="chain" id="PRO_0000414771" description="Cell division protein DivIB">
    <location>
        <begin position="1"/>
        <end position="281"/>
    </location>
</feature>
<feature type="topological domain" description="Cytoplasmic" evidence="1">
    <location>
        <begin position="1"/>
        <end position="46"/>
    </location>
</feature>
<feature type="transmembrane region" description="Helical" evidence="1">
    <location>
        <begin position="47"/>
        <end position="69"/>
    </location>
</feature>
<feature type="topological domain" description="Extracellular" evidence="1">
    <location>
        <begin position="70"/>
        <end position="281"/>
    </location>
</feature>
<feature type="domain" description="POTRA" evidence="2">
    <location>
        <begin position="73"/>
        <end position="144"/>
    </location>
</feature>
<feature type="region of interest" description="Disordered" evidence="3">
    <location>
        <begin position="1"/>
        <end position="36"/>
    </location>
</feature>
<feature type="compositionally biased region" description="Basic and acidic residues" evidence="3">
    <location>
        <begin position="8"/>
        <end position="31"/>
    </location>
</feature>
<protein>
    <recommendedName>
        <fullName evidence="1">Cell division protein DivIB</fullName>
    </recommendedName>
</protein>
<reference key="1">
    <citation type="journal article" date="2006" name="Proc. Natl. Acad. Sci. U.S.A.">
        <title>The complete genome sequence of Lactobacillus bulgaricus reveals extensive and ongoing reductive evolution.</title>
        <authorList>
            <person name="van de Guchte M."/>
            <person name="Penaud S."/>
            <person name="Grimaldi C."/>
            <person name="Barbe V."/>
            <person name="Bryson K."/>
            <person name="Nicolas P."/>
            <person name="Robert C."/>
            <person name="Oztas S."/>
            <person name="Mangenot S."/>
            <person name="Couloux A."/>
            <person name="Loux V."/>
            <person name="Dervyn R."/>
            <person name="Bossy R."/>
            <person name="Bolotin A."/>
            <person name="Batto J.-M."/>
            <person name="Walunas T."/>
            <person name="Gibrat J.-F."/>
            <person name="Bessieres P."/>
            <person name="Weissenbach J."/>
            <person name="Ehrlich S.D."/>
            <person name="Maguin E."/>
        </authorList>
    </citation>
    <scope>NUCLEOTIDE SEQUENCE [LARGE SCALE GENOMIC DNA]</scope>
    <source>
        <strain>ATCC 11842 / DSM 20081 / BCRC 10696 / JCM 1002 / NBRC 13953 / NCIMB 11778 / NCTC 12712 / WDCM 00102 / Lb 14</strain>
    </source>
</reference>
<sequence length="281" mass="31575">MARKRITRRDPEEELSKFLRHEPGQGQETRKLSSQLTSLKKERRRGLLTRLGSIMAVCLLAIAFLTYYVSPLADVSTVRVLGADDLDGKSMVEVAQIKASDKVVDALRGQKKISKKLAAKYPEVASVTLSVKGLNTLNMQVHERKVSGYIKDGSSYREILANGELGTKSLAWREFDHDKPLFISYSKQVALKTNLKIFNSFPEYFKKQVKMLSGNTRRKTQMILVMKDGNVIIGNTETIKSKVKYYNSIKQDLTTNSVIDMEVGAFTRPLTSAEKKAYGLS</sequence>
<accession>Q1GAT4</accession>
<keyword id="KW-0131">Cell cycle</keyword>
<keyword id="KW-0132">Cell division</keyword>
<keyword id="KW-1003">Cell membrane</keyword>
<keyword id="KW-0472">Membrane</keyword>
<keyword id="KW-1185">Reference proteome</keyword>
<keyword id="KW-0812">Transmembrane</keyword>
<keyword id="KW-1133">Transmembrane helix</keyword>